<sequence>MAPLGYFLLLCSLKQALGSYPIWWSLAVGPQYSSLGSQPILCASIPGLVPKQLRFCRNYVEIMPSVAEGIKIGIQECQHQFRGRRWNCTTVHDSLAIFGPVLDKATRESAFVHAIASAGVAFAVTRSCAEGTAAICGCSSRHQGSPGKGWKWGGCSEDIEFGGMVSREFADARENRPDARSAMNRHNNEAGRQAIASHMHLKCKCHGLSGSCEVKTCWWSQPDFRAIGDFLKDKYDSASEMVVEKHRESRGWVETLRPRYTYFKVPTERDLVYYEASPNFCEPNPETGSFGTRDRTCNVSSHGIDGCDLLCCGRGHNARAERRREKCRCVFHWCCYVSCQECTRVYDVHTCK</sequence>
<organism>
    <name type="scientific">Homo sapiens</name>
    <name type="common">Human</name>
    <dbReference type="NCBI Taxonomy" id="9606"/>
    <lineage>
        <taxon>Eukaryota</taxon>
        <taxon>Metazoa</taxon>
        <taxon>Chordata</taxon>
        <taxon>Craniata</taxon>
        <taxon>Vertebrata</taxon>
        <taxon>Euteleostomi</taxon>
        <taxon>Mammalia</taxon>
        <taxon>Eutheria</taxon>
        <taxon>Euarchontoglires</taxon>
        <taxon>Primates</taxon>
        <taxon>Haplorrhini</taxon>
        <taxon>Catarrhini</taxon>
        <taxon>Hominidae</taxon>
        <taxon>Homo</taxon>
    </lineage>
</organism>
<comment type="function">
    <text evidence="1 7 10 12 14 18">Ligand for members of the frizzled family of seven transmembrane receptors (Probable). Functions in the canonical Wnt signaling pathway that results in activation of transcription factors of the TCF/LEF family (PubMed:20093360, PubMed:21244856, PubMed:24841207, PubMed:26902720). Required for normal embryonic mesoderm development and formation of caudal somites. Required for normal morphogenesis of the developing neural tube (By similarity). Mediates self-renewal of the stem cells at the bottom on intestinal crypts (in vitro) (PubMed:26902720).</text>
</comment>
<comment type="subunit">
    <text evidence="1 5 6 7 8 12 14 15 16 19">Forms a soluble 1:1 complex with AFM; this prevents oligomerization and is required for prolonged biological activity (PubMed:26902720). The complex with AFM may represent the physiological form in body fluids (PubMed:26902720). Homooligomer; disulfide-linked, leading to inactivation (By similarity). Interacts with PORCN (PubMed:20826466). Interacts with APCDD1 and WLS (PubMed:16678095, PubMed:20393562). Component of the Wnt-Fzd-LRP5-LRP6 signaling complex that contains a WNT protein, a FZD protein and LRP5 or LRP6. Interacts directly in the complex with LRP6 (PubMed:20093360). Interacts with glypican GPC3 (PubMed:16227623). Interacts with PKD1 (via extracellular domain) (PubMed:27214281). Interacts with FZD5 (PubMed:26908622).</text>
</comment>
<comment type="interaction">
    <interactant intactId="EBI-6173037">
        <id>P56704</id>
    </interactant>
    <interactant intactId="EBI-2683489">
        <id>Q8J025</id>
        <label>APCDD1</label>
    </interactant>
    <organismsDiffer>false</organismsDiffer>
    <experiments>3</experiments>
</comment>
<comment type="interaction">
    <interactant intactId="EBI-6173037">
        <id>P56704</id>
    </interactant>
    <interactant intactId="EBI-6254212">
        <id>Q9H461</id>
        <label>FZD8</label>
    </interactant>
    <organismsDiffer>false</organismsDiffer>
    <experiments>2</experiments>
</comment>
<comment type="interaction">
    <interactant intactId="EBI-6173037">
        <id>P56704</id>
    </interactant>
    <interactant intactId="EBI-910915">
        <id>O75581</id>
        <label>LRP6</label>
    </interactant>
    <organismsDiffer>false</organismsDiffer>
    <experiments>3</experiments>
</comment>
<comment type="interaction">
    <interactant intactId="EBI-6173037">
        <id>P56704</id>
    </interactant>
    <interactant intactId="EBI-2868748">
        <id>Q5T9L3</id>
        <label>WLS</label>
    </interactant>
    <organismsDiffer>false</organismsDiffer>
    <experiments>5</experiments>
</comment>
<comment type="subcellular location">
    <subcellularLocation>
        <location evidence="1">Secreted</location>
        <location evidence="1">Extracellular space</location>
        <location evidence="1">Extracellular matrix</location>
    </subcellularLocation>
    <subcellularLocation>
        <location evidence="12 14">Secreted</location>
    </subcellularLocation>
</comment>
<comment type="alternative products">
    <event type="alternative splicing"/>
    <isoform>
        <id>P56704-1</id>
        <name>1</name>
        <sequence type="displayed"/>
    </isoform>
    <isoform>
        <id>P56704-2</id>
        <name>2</name>
        <sequence type="described" ref="VSP_046558"/>
    </isoform>
</comment>
<comment type="tissue specificity">
    <text evidence="4">Moderately expressed in placenta and at low levels in adult lung, spleen, and prostate.</text>
</comment>
<comment type="PTM">
    <text evidence="9 10 11 13">Palmitoleoylation by PORCN is required for efficient binding to frizzled receptors. Palmitoleoylation is required for proper trafficking to cell surface, vacuolar acidification is critical to release palmitoleoylated WNT3A from WLS in secretory vesicles (PubMed:20826466, PubMed:21244856, PubMed:24292069). Depalmitoleoylated by NOTUM, leading to inhibit Wnt signaling pathway, possibly by promoting disulfide bond formation and oligomerization (PubMed:25731175).</text>
</comment>
<comment type="PTM">
    <text evidence="1">Proteolytic processing by TIKI1 and TIKI2 promotes oxidation and formation of large disulfide-bond oligomers, leading to inactivation of WNT3A.</text>
</comment>
<comment type="PTM">
    <text evidence="12">Disulfide bonds have critical and distinct roles in secretion and activity. Loss of each conserved cysteine in WNT3A results in high molecular weight oxidized Wnt oligomers, which are formed through inter-Wnt disulfide bonding.</text>
</comment>
<comment type="similarity">
    <text evidence="18">Belongs to the Wnt family.</text>
</comment>
<comment type="caution">
    <text evidence="11">A palmitoylation site was proposed at Cys-77, but it was later shown that this cysteine is engaged in a disulfide bond (PubMed:24292069).</text>
</comment>
<evidence type="ECO:0000250" key="1">
    <source>
        <dbReference type="UniProtKB" id="P27467"/>
    </source>
</evidence>
<evidence type="ECO:0000250" key="2">
    <source>
        <dbReference type="UniProtKB" id="P28026"/>
    </source>
</evidence>
<evidence type="ECO:0000255" key="3"/>
<evidence type="ECO:0000269" key="4">
    <source>
    </source>
</evidence>
<evidence type="ECO:0000269" key="5">
    <source>
    </source>
</evidence>
<evidence type="ECO:0000269" key="6">
    <source>
    </source>
</evidence>
<evidence type="ECO:0000269" key="7">
    <source>
    </source>
</evidence>
<evidence type="ECO:0000269" key="8">
    <source>
    </source>
</evidence>
<evidence type="ECO:0000269" key="9">
    <source>
    </source>
</evidence>
<evidence type="ECO:0000269" key="10">
    <source>
    </source>
</evidence>
<evidence type="ECO:0000269" key="11">
    <source>
    </source>
</evidence>
<evidence type="ECO:0000269" key="12">
    <source>
    </source>
</evidence>
<evidence type="ECO:0000269" key="13">
    <source>
    </source>
</evidence>
<evidence type="ECO:0000269" key="14">
    <source>
    </source>
</evidence>
<evidence type="ECO:0000269" key="15">
    <source>
    </source>
</evidence>
<evidence type="ECO:0000269" key="16">
    <source>
    </source>
</evidence>
<evidence type="ECO:0000303" key="17">
    <source>
    </source>
</evidence>
<evidence type="ECO:0000305" key="18"/>
<evidence type="ECO:0000305" key="19">
    <source>
    </source>
</evidence>
<evidence type="ECO:0007829" key="20">
    <source>
        <dbReference type="PDB" id="7DRT"/>
    </source>
</evidence>
<evidence type="ECO:0007829" key="21">
    <source>
        <dbReference type="PDB" id="8TZR"/>
    </source>
</evidence>
<gene>
    <name type="primary">WNT3A</name>
</gene>
<dbReference type="EMBL" id="AB060284">
    <property type="protein sequence ID" value="BAB61052.1"/>
    <property type="molecule type" value="mRNA"/>
</dbReference>
<dbReference type="EMBL" id="AK056278">
    <property type="protein sequence ID" value="BAB71136.1"/>
    <property type="molecule type" value="mRNA"/>
</dbReference>
<dbReference type="EMBL" id="AL136379">
    <property type="status" value="NOT_ANNOTATED_CDS"/>
    <property type="molecule type" value="Genomic_DNA"/>
</dbReference>
<dbReference type="EMBL" id="BC103921">
    <property type="protein sequence ID" value="AAI03922.1"/>
    <property type="molecule type" value="mRNA"/>
</dbReference>
<dbReference type="EMBL" id="BC103922">
    <property type="protein sequence ID" value="AAI03923.1"/>
    <property type="molecule type" value="mRNA"/>
</dbReference>
<dbReference type="EMBL" id="BC103923">
    <property type="protein sequence ID" value="AAI03924.1"/>
    <property type="molecule type" value="mRNA"/>
</dbReference>
<dbReference type="CCDS" id="CCDS1564.1">
    <molecule id="P56704-1"/>
</dbReference>
<dbReference type="RefSeq" id="NP_149122.1">
    <molecule id="P56704-1"/>
    <property type="nucleotide sequence ID" value="NM_033131.4"/>
</dbReference>
<dbReference type="PDB" id="7DRT">
    <property type="method" value="EM"/>
    <property type="resolution" value="2.20 A"/>
    <property type="chains" value="A=1-352"/>
</dbReference>
<dbReference type="PDB" id="7URD">
    <property type="method" value="EM"/>
    <property type="resolution" value="2.92 A"/>
    <property type="chains" value="B=199-220"/>
</dbReference>
<dbReference type="PDB" id="7URE">
    <property type="method" value="EM"/>
    <property type="resolution" value="3.19 A"/>
    <property type="chains" value="B=199-220"/>
</dbReference>
<dbReference type="PDB" id="8TZR">
    <property type="method" value="EM"/>
    <property type="resolution" value="3.50 A"/>
    <property type="chains" value="A=1-352"/>
</dbReference>
<dbReference type="PDBsum" id="7DRT"/>
<dbReference type="PDBsum" id="7URD"/>
<dbReference type="PDBsum" id="7URE"/>
<dbReference type="PDBsum" id="8TZR"/>
<dbReference type="EMDB" id="EMD-26709"/>
<dbReference type="EMDB" id="EMD-26710"/>
<dbReference type="EMDB" id="EMD-30827"/>
<dbReference type="EMDB" id="EMD-41767"/>
<dbReference type="SMR" id="P56704"/>
<dbReference type="BioGRID" id="124599">
    <property type="interactions" value="40"/>
</dbReference>
<dbReference type="CORUM" id="P56704"/>
<dbReference type="DIP" id="DIP-58592N"/>
<dbReference type="FunCoup" id="P56704">
    <property type="interactions" value="442"/>
</dbReference>
<dbReference type="IntAct" id="P56704">
    <property type="interactions" value="37"/>
</dbReference>
<dbReference type="STRING" id="9606.ENSP00000284523"/>
<dbReference type="BindingDB" id="P56704"/>
<dbReference type="ChEMBL" id="CHEMBL1255137"/>
<dbReference type="GlyCosmos" id="P56704">
    <property type="glycosylation" value="2 sites, No reported glycans"/>
</dbReference>
<dbReference type="GlyGen" id="P56704">
    <property type="glycosylation" value="4 sites, 2 N-linked glycans (2 sites)"/>
</dbReference>
<dbReference type="iPTMnet" id="P56704"/>
<dbReference type="PhosphoSitePlus" id="P56704"/>
<dbReference type="BioMuta" id="WNT3A"/>
<dbReference type="DMDM" id="20532424"/>
<dbReference type="jPOST" id="P56704"/>
<dbReference type="MassIVE" id="P56704"/>
<dbReference type="PaxDb" id="9606-ENSP00000284523"/>
<dbReference type="PeptideAtlas" id="P56704"/>
<dbReference type="ProteomicsDB" id="56937">
    <molecule id="P56704-1"/>
</dbReference>
<dbReference type="Antibodypedia" id="34658">
    <property type="antibodies" value="602 antibodies from 36 providers"/>
</dbReference>
<dbReference type="DNASU" id="89780"/>
<dbReference type="Ensembl" id="ENST00000284523.2">
    <molecule id="P56704-1"/>
    <property type="protein sequence ID" value="ENSP00000284523.1"/>
    <property type="gene ID" value="ENSG00000154342.6"/>
</dbReference>
<dbReference type="GeneID" id="89780"/>
<dbReference type="KEGG" id="hsa:89780"/>
<dbReference type="MANE-Select" id="ENST00000284523.2">
    <property type="protein sequence ID" value="ENSP00000284523.1"/>
    <property type="RefSeq nucleotide sequence ID" value="NM_033131.4"/>
    <property type="RefSeq protein sequence ID" value="NP_149122.1"/>
</dbReference>
<dbReference type="UCSC" id="uc001hrq.3">
    <molecule id="P56704-1"/>
    <property type="organism name" value="human"/>
</dbReference>
<dbReference type="AGR" id="HGNC:15983"/>
<dbReference type="CTD" id="89780"/>
<dbReference type="DisGeNET" id="89780"/>
<dbReference type="GeneCards" id="WNT3A"/>
<dbReference type="HGNC" id="HGNC:15983">
    <property type="gene designation" value="WNT3A"/>
</dbReference>
<dbReference type="HPA" id="ENSG00000154342">
    <property type="expression patterns" value="Tissue enriched (placenta)"/>
</dbReference>
<dbReference type="MalaCards" id="WNT3A"/>
<dbReference type="MIM" id="606359">
    <property type="type" value="gene"/>
</dbReference>
<dbReference type="neXtProt" id="NX_P56704"/>
<dbReference type="OpenTargets" id="ENSG00000154342"/>
<dbReference type="Orphanet" id="85193">
    <property type="disease" value="Idiopathic juvenile osteoporosis"/>
</dbReference>
<dbReference type="PharmGKB" id="PA38074"/>
<dbReference type="VEuPathDB" id="HostDB:ENSG00000154342"/>
<dbReference type="eggNOG" id="KOG3913">
    <property type="taxonomic scope" value="Eukaryota"/>
</dbReference>
<dbReference type="GeneTree" id="ENSGT00940000160510"/>
<dbReference type="HOGENOM" id="CLU_033039_1_0_1"/>
<dbReference type="InParanoid" id="P56704"/>
<dbReference type="OMA" id="GLTHVMA"/>
<dbReference type="OrthoDB" id="5945655at2759"/>
<dbReference type="PAN-GO" id="P56704">
    <property type="GO annotations" value="6 GO annotations based on evolutionary models"/>
</dbReference>
<dbReference type="PhylomeDB" id="P56704"/>
<dbReference type="TreeFam" id="TF105310"/>
<dbReference type="PathwayCommons" id="P56704"/>
<dbReference type="Reactome" id="R-HSA-201681">
    <property type="pathway name" value="TCF dependent signaling in response to WNT"/>
</dbReference>
<dbReference type="Reactome" id="R-HSA-3238698">
    <property type="pathway name" value="WNT ligand biogenesis and trafficking"/>
</dbReference>
<dbReference type="Reactome" id="R-HSA-373080">
    <property type="pathway name" value="Class B/2 (Secretin family receptors)"/>
</dbReference>
<dbReference type="Reactome" id="R-HSA-3772470">
    <property type="pathway name" value="Negative regulation of TCF-dependent signaling by WNT ligand antagonists"/>
</dbReference>
<dbReference type="Reactome" id="R-HSA-4641262">
    <property type="pathway name" value="Disassembly of the destruction complex and recruitment of AXIN to the membrane"/>
</dbReference>
<dbReference type="Reactome" id="R-HSA-4641263">
    <property type="pathway name" value="Regulation of FZD by ubiquitination"/>
</dbReference>
<dbReference type="Reactome" id="R-HSA-5340588">
    <property type="pathway name" value="Signaling by RNF43 mutants"/>
</dbReference>
<dbReference type="Reactome" id="R-HSA-9793380">
    <property type="pathway name" value="Formation of paraxial mesoderm"/>
</dbReference>
<dbReference type="Reactome" id="R-HSA-9832991">
    <property type="pathway name" value="Formation of the posterior neural plate"/>
</dbReference>
<dbReference type="Reactome" id="R-HSA-9834899">
    <property type="pathway name" value="Specification of the neural plate border"/>
</dbReference>
<dbReference type="Reactome" id="R-HSA-9856649">
    <property type="pathway name" value="Transcriptional and post-translational regulation of MITF-M expression and activity"/>
</dbReference>
<dbReference type="SignaLink" id="P56704"/>
<dbReference type="SIGNOR" id="P56704"/>
<dbReference type="BioGRID-ORCS" id="89780">
    <property type="hits" value="15 hits in 1159 CRISPR screens"/>
</dbReference>
<dbReference type="ChiTaRS" id="WNT3A">
    <property type="organism name" value="human"/>
</dbReference>
<dbReference type="GeneWiki" id="WNT3A"/>
<dbReference type="GenomeRNAi" id="89780"/>
<dbReference type="Pharos" id="P56704">
    <property type="development level" value="Tchem"/>
</dbReference>
<dbReference type="PRO" id="PR:P56704"/>
<dbReference type="Proteomes" id="UP000005640">
    <property type="component" value="Chromosome 1"/>
</dbReference>
<dbReference type="RNAct" id="P56704">
    <property type="molecule type" value="protein"/>
</dbReference>
<dbReference type="Bgee" id="ENSG00000154342">
    <property type="expression patterns" value="Expressed in placenta and 24 other cell types or tissues"/>
</dbReference>
<dbReference type="GO" id="GO:0009986">
    <property type="term" value="C:cell surface"/>
    <property type="evidence" value="ECO:0000250"/>
    <property type="project" value="BHF-UCL"/>
</dbReference>
<dbReference type="GO" id="GO:0031901">
    <property type="term" value="C:early endosome membrane"/>
    <property type="evidence" value="ECO:0000304"/>
    <property type="project" value="Reactome"/>
</dbReference>
<dbReference type="GO" id="GO:0030666">
    <property type="term" value="C:endocytic vesicle membrane"/>
    <property type="evidence" value="ECO:0000304"/>
    <property type="project" value="Reactome"/>
</dbReference>
<dbReference type="GO" id="GO:0005788">
    <property type="term" value="C:endoplasmic reticulum lumen"/>
    <property type="evidence" value="ECO:0000304"/>
    <property type="project" value="Reactome"/>
</dbReference>
<dbReference type="GO" id="GO:0070062">
    <property type="term" value="C:extracellular exosome"/>
    <property type="evidence" value="ECO:0000304"/>
    <property type="project" value="Reactome"/>
</dbReference>
<dbReference type="GO" id="GO:0005576">
    <property type="term" value="C:extracellular region"/>
    <property type="evidence" value="ECO:0000304"/>
    <property type="project" value="Reactome"/>
</dbReference>
<dbReference type="GO" id="GO:0005615">
    <property type="term" value="C:extracellular space"/>
    <property type="evidence" value="ECO:0000314"/>
    <property type="project" value="UniProtKB"/>
</dbReference>
<dbReference type="GO" id="GO:0098978">
    <property type="term" value="C:glutamatergic synapse"/>
    <property type="evidence" value="ECO:0000314"/>
    <property type="project" value="SynGO"/>
</dbReference>
<dbReference type="GO" id="GO:0005796">
    <property type="term" value="C:Golgi lumen"/>
    <property type="evidence" value="ECO:0000304"/>
    <property type="project" value="Reactome"/>
</dbReference>
<dbReference type="GO" id="GO:0005886">
    <property type="term" value="C:plasma membrane"/>
    <property type="evidence" value="ECO:0000304"/>
    <property type="project" value="Reactome"/>
</dbReference>
<dbReference type="GO" id="GO:0098793">
    <property type="term" value="C:presynapse"/>
    <property type="evidence" value="ECO:0007669"/>
    <property type="project" value="GOC"/>
</dbReference>
<dbReference type="GO" id="GO:1990851">
    <property type="term" value="C:Wnt-Frizzled-LRP5/6 complex"/>
    <property type="evidence" value="ECO:0000314"/>
    <property type="project" value="ParkinsonsUK-UCL"/>
</dbReference>
<dbReference type="GO" id="GO:0039706">
    <property type="term" value="F:co-receptor binding"/>
    <property type="evidence" value="ECO:0000353"/>
    <property type="project" value="ParkinsonsUK-UCL"/>
</dbReference>
<dbReference type="GO" id="GO:0005125">
    <property type="term" value="F:cytokine activity"/>
    <property type="evidence" value="ECO:0000318"/>
    <property type="project" value="GO_Central"/>
</dbReference>
<dbReference type="GO" id="GO:0005109">
    <property type="term" value="F:frizzled binding"/>
    <property type="evidence" value="ECO:0000318"/>
    <property type="project" value="GO_Central"/>
</dbReference>
<dbReference type="GO" id="GO:0042802">
    <property type="term" value="F:identical protein binding"/>
    <property type="evidence" value="ECO:0007669"/>
    <property type="project" value="Ensembl"/>
</dbReference>
<dbReference type="GO" id="GO:0019904">
    <property type="term" value="F:protein domain specific binding"/>
    <property type="evidence" value="ECO:0007669"/>
    <property type="project" value="Ensembl"/>
</dbReference>
<dbReference type="GO" id="GO:0048018">
    <property type="term" value="F:receptor ligand activity"/>
    <property type="evidence" value="ECO:0000314"/>
    <property type="project" value="BHF-UCL"/>
</dbReference>
<dbReference type="GO" id="GO:0005102">
    <property type="term" value="F:signaling receptor binding"/>
    <property type="evidence" value="ECO:0000353"/>
    <property type="project" value="ParkinsonsUK-UCL"/>
</dbReference>
<dbReference type="GO" id="GO:0003713">
    <property type="term" value="F:transcription coactivator activity"/>
    <property type="evidence" value="ECO:0007669"/>
    <property type="project" value="Ensembl"/>
</dbReference>
<dbReference type="GO" id="GO:0090245">
    <property type="term" value="P:axis elongation involved in somitogenesis"/>
    <property type="evidence" value="ECO:0007669"/>
    <property type="project" value="Ensembl"/>
</dbReference>
<dbReference type="GO" id="GO:0007411">
    <property type="term" value="P:axon guidance"/>
    <property type="evidence" value="ECO:0007669"/>
    <property type="project" value="Ensembl"/>
</dbReference>
<dbReference type="GO" id="GO:0042100">
    <property type="term" value="P:B cell proliferation"/>
    <property type="evidence" value="ECO:0007669"/>
    <property type="project" value="Ensembl"/>
</dbReference>
<dbReference type="GO" id="GO:0090676">
    <property type="term" value="P:calcium ion transmembrane transport via low voltage-gated calcium channel"/>
    <property type="evidence" value="ECO:0007669"/>
    <property type="project" value="Ensembl"/>
</dbReference>
<dbReference type="GO" id="GO:0060070">
    <property type="term" value="P:canonical Wnt signaling pathway"/>
    <property type="evidence" value="ECO:0000314"/>
    <property type="project" value="UniProtKB"/>
</dbReference>
<dbReference type="GO" id="GO:0060923">
    <property type="term" value="P:cardiac muscle cell fate commitment"/>
    <property type="evidence" value="ECO:0000314"/>
    <property type="project" value="BHF-UCL"/>
</dbReference>
<dbReference type="GO" id="GO:0045165">
    <property type="term" value="P:cell fate commitment"/>
    <property type="evidence" value="ECO:0000318"/>
    <property type="project" value="GO_Central"/>
</dbReference>
<dbReference type="GO" id="GO:0021846">
    <property type="term" value="P:cell proliferation in forebrain"/>
    <property type="evidence" value="ECO:0000250"/>
    <property type="project" value="BHF-UCL"/>
</dbReference>
<dbReference type="GO" id="GO:0033278">
    <property type="term" value="P:cell proliferation in midbrain"/>
    <property type="evidence" value="ECO:0000304"/>
    <property type="project" value="ParkinsonsUK-UCL"/>
</dbReference>
<dbReference type="GO" id="GO:0071300">
    <property type="term" value="P:cellular response to retinoic acid"/>
    <property type="evidence" value="ECO:0000250"/>
    <property type="project" value="UniProtKB"/>
</dbReference>
<dbReference type="GO" id="GO:0010387">
    <property type="term" value="P:COP9 signalosome assembly"/>
    <property type="evidence" value="ECO:0000250"/>
    <property type="project" value="BHF-UCL"/>
</dbReference>
<dbReference type="GO" id="GO:0021904">
    <property type="term" value="P:dorsal/ventral neural tube patterning"/>
    <property type="evidence" value="ECO:0007669"/>
    <property type="project" value="Ensembl"/>
</dbReference>
<dbReference type="GO" id="GO:0030198">
    <property type="term" value="P:extracellular matrix organization"/>
    <property type="evidence" value="ECO:0007669"/>
    <property type="project" value="Ensembl"/>
</dbReference>
<dbReference type="GO" id="GO:0045444">
    <property type="term" value="P:fat cell differentiation"/>
    <property type="evidence" value="ECO:0007669"/>
    <property type="project" value="Ensembl"/>
</dbReference>
<dbReference type="GO" id="GO:0007507">
    <property type="term" value="P:heart development"/>
    <property type="evidence" value="ECO:0000314"/>
    <property type="project" value="BHF-UCL"/>
</dbReference>
<dbReference type="GO" id="GO:0001947">
    <property type="term" value="P:heart looping"/>
    <property type="evidence" value="ECO:0007669"/>
    <property type="project" value="Ensembl"/>
</dbReference>
<dbReference type="GO" id="GO:0030097">
    <property type="term" value="P:hemopoiesis"/>
    <property type="evidence" value="ECO:0007669"/>
    <property type="project" value="Ensembl"/>
</dbReference>
<dbReference type="GO" id="GO:0021766">
    <property type="term" value="P:hippocampus development"/>
    <property type="evidence" value="ECO:0007669"/>
    <property type="project" value="Ensembl"/>
</dbReference>
<dbReference type="GO" id="GO:0001701">
    <property type="term" value="P:in utero embryonic development"/>
    <property type="evidence" value="ECO:0007669"/>
    <property type="project" value="Ensembl"/>
</dbReference>
<dbReference type="GO" id="GO:0042472">
    <property type="term" value="P:inner ear morphogenesis"/>
    <property type="evidence" value="ECO:0007669"/>
    <property type="project" value="Ensembl"/>
</dbReference>
<dbReference type="GO" id="GO:0030879">
    <property type="term" value="P:mammary gland development"/>
    <property type="evidence" value="ECO:0007669"/>
    <property type="project" value="Ensembl"/>
</dbReference>
<dbReference type="GO" id="GO:1904948">
    <property type="term" value="P:midbrain dopaminergic neuron differentiation"/>
    <property type="evidence" value="ECO:0000304"/>
    <property type="project" value="ParkinsonsUK-UCL"/>
</dbReference>
<dbReference type="GO" id="GO:0050804">
    <property type="term" value="P:modulation of chemical synaptic transmission"/>
    <property type="evidence" value="ECO:0007669"/>
    <property type="project" value="Ensembl"/>
</dbReference>
<dbReference type="GO" id="GO:0045445">
    <property type="term" value="P:myoblast differentiation"/>
    <property type="evidence" value="ECO:0007669"/>
    <property type="project" value="Ensembl"/>
</dbReference>
<dbReference type="GO" id="GO:0048843">
    <property type="term" value="P:negative regulation of axon extension involved in axon guidance"/>
    <property type="evidence" value="ECO:0007669"/>
    <property type="project" value="Ensembl"/>
</dbReference>
<dbReference type="GO" id="GO:1904339">
    <property type="term" value="P:negative regulation of dopaminergic neuron differentiation"/>
    <property type="evidence" value="ECO:0007669"/>
    <property type="project" value="Ensembl"/>
</dbReference>
<dbReference type="GO" id="GO:0045599">
    <property type="term" value="P:negative regulation of fat cell differentiation"/>
    <property type="evidence" value="ECO:0007669"/>
    <property type="project" value="Ensembl"/>
</dbReference>
<dbReference type="GO" id="GO:0050768">
    <property type="term" value="P:negative regulation of neurogenesis"/>
    <property type="evidence" value="ECO:0000250"/>
    <property type="project" value="BHF-UCL"/>
</dbReference>
<dbReference type="GO" id="GO:0010977">
    <property type="term" value="P:negative regulation of neuron projection development"/>
    <property type="evidence" value="ECO:0000250"/>
    <property type="project" value="UniProtKB"/>
</dbReference>
<dbReference type="GO" id="GO:0030182">
    <property type="term" value="P:neuron differentiation"/>
    <property type="evidence" value="ECO:0000250"/>
    <property type="project" value="UniProtKB"/>
</dbReference>
<dbReference type="GO" id="GO:0035567">
    <property type="term" value="P:non-canonical Wnt signaling pathway"/>
    <property type="evidence" value="ECO:0007669"/>
    <property type="project" value="Ensembl"/>
</dbReference>
<dbReference type="GO" id="GO:0001649">
    <property type="term" value="P:osteoblast differentiation"/>
    <property type="evidence" value="ECO:0007669"/>
    <property type="project" value="Ensembl"/>
</dbReference>
<dbReference type="GO" id="GO:0048343">
    <property type="term" value="P:paraxial mesodermal cell fate commitment"/>
    <property type="evidence" value="ECO:0007669"/>
    <property type="project" value="Ensembl"/>
</dbReference>
<dbReference type="GO" id="GO:0070527">
    <property type="term" value="P:platelet aggregation"/>
    <property type="evidence" value="ECO:0007669"/>
    <property type="project" value="Ensembl"/>
</dbReference>
<dbReference type="GO" id="GO:0030890">
    <property type="term" value="P:positive regulation of B cell proliferation"/>
    <property type="evidence" value="ECO:0007669"/>
    <property type="project" value="Ensembl"/>
</dbReference>
<dbReference type="GO" id="GO:0090263">
    <property type="term" value="P:positive regulation of canonical Wnt signaling pathway"/>
    <property type="evidence" value="ECO:0000314"/>
    <property type="project" value="BHF-UCL"/>
</dbReference>
<dbReference type="GO" id="GO:2000727">
    <property type="term" value="P:positive regulation of cardiac muscle cell differentiation"/>
    <property type="evidence" value="ECO:0000314"/>
    <property type="project" value="BHF-UCL"/>
</dbReference>
<dbReference type="GO" id="GO:2000049">
    <property type="term" value="P:positive regulation of cell-cell adhesion mediated by cadherin"/>
    <property type="evidence" value="ECO:0007669"/>
    <property type="project" value="Ensembl"/>
</dbReference>
<dbReference type="GO" id="GO:0048697">
    <property type="term" value="P:positive regulation of collateral sprouting in absence of injury"/>
    <property type="evidence" value="ECO:0007669"/>
    <property type="project" value="Ensembl"/>
</dbReference>
<dbReference type="GO" id="GO:0001819">
    <property type="term" value="P:positive regulation of cytokine production"/>
    <property type="evidence" value="ECO:0007669"/>
    <property type="project" value="Ensembl"/>
</dbReference>
<dbReference type="GO" id="GO:0061184">
    <property type="term" value="P:positive regulation of dermatome development"/>
    <property type="evidence" value="ECO:0000314"/>
    <property type="project" value="BHF-UCL"/>
</dbReference>
<dbReference type="GO" id="GO:0045893">
    <property type="term" value="P:positive regulation of DNA-templated transcription"/>
    <property type="evidence" value="ECO:0000250"/>
    <property type="project" value="BHF-UCL"/>
</dbReference>
<dbReference type="GO" id="GO:0010628">
    <property type="term" value="P:positive regulation of gene expression"/>
    <property type="evidence" value="ECO:0000314"/>
    <property type="project" value="BHF-UCL"/>
</dbReference>
<dbReference type="GO" id="GO:2000347">
    <property type="term" value="P:positive regulation of hepatocyte proliferation"/>
    <property type="evidence" value="ECO:0007669"/>
    <property type="project" value="Ensembl"/>
</dbReference>
<dbReference type="GO" id="GO:0048337">
    <property type="term" value="P:positive regulation of mesodermal cell fate specification"/>
    <property type="evidence" value="ECO:0000314"/>
    <property type="project" value="BHF-UCL"/>
</dbReference>
<dbReference type="GO" id="GO:2000179">
    <property type="term" value="P:positive regulation of neural precursor cell proliferation"/>
    <property type="evidence" value="ECO:0007669"/>
    <property type="project" value="Ensembl"/>
</dbReference>
<dbReference type="GO" id="GO:1903078">
    <property type="term" value="P:positive regulation of protein localization to plasma membrane"/>
    <property type="evidence" value="ECO:0007669"/>
    <property type="project" value="Ensembl"/>
</dbReference>
<dbReference type="GO" id="GO:0002092">
    <property type="term" value="P:positive regulation of receptor internalization"/>
    <property type="evidence" value="ECO:0000314"/>
    <property type="project" value="BHF-UCL"/>
</dbReference>
<dbReference type="GO" id="GO:0048643">
    <property type="term" value="P:positive regulation of skeletal muscle tissue development"/>
    <property type="evidence" value="ECO:0007669"/>
    <property type="project" value="Ensembl"/>
</dbReference>
<dbReference type="GO" id="GO:0045944">
    <property type="term" value="P:positive regulation of transcription by RNA polymerase II"/>
    <property type="evidence" value="ECO:0000314"/>
    <property type="project" value="BHF-UCL"/>
</dbReference>
<dbReference type="GO" id="GO:0036342">
    <property type="term" value="P:post-anal tail morphogenesis"/>
    <property type="evidence" value="ECO:0007669"/>
    <property type="project" value="Ensembl"/>
</dbReference>
<dbReference type="GO" id="GO:0099054">
    <property type="term" value="P:presynapse assembly"/>
    <property type="evidence" value="ECO:0000304"/>
    <property type="project" value="ParkinsonsUK-UCL"/>
</dbReference>
<dbReference type="GO" id="GO:0008104">
    <property type="term" value="P:protein localization"/>
    <property type="evidence" value="ECO:0007669"/>
    <property type="project" value="Ensembl"/>
</dbReference>
<dbReference type="GO" id="GO:0070507">
    <property type="term" value="P:regulation of microtubule cytoskeleton organization"/>
    <property type="evidence" value="ECO:0007669"/>
    <property type="project" value="Ensembl"/>
</dbReference>
<dbReference type="GO" id="GO:1905539">
    <property type="term" value="P:regulation of postsynapse to nucleus signaling pathway"/>
    <property type="evidence" value="ECO:0007669"/>
    <property type="project" value="Ensembl"/>
</dbReference>
<dbReference type="GO" id="GO:1905606">
    <property type="term" value="P:regulation of presynapse assembly"/>
    <property type="evidence" value="ECO:0000314"/>
    <property type="project" value="SynGO"/>
</dbReference>
<dbReference type="GO" id="GO:0050807">
    <property type="term" value="P:regulation of synapse organization"/>
    <property type="evidence" value="ECO:0000314"/>
    <property type="project" value="SynGO"/>
</dbReference>
<dbReference type="GO" id="GO:0062009">
    <property type="term" value="P:secondary palate development"/>
    <property type="evidence" value="ECO:0000315"/>
    <property type="project" value="BHF-UCL"/>
</dbReference>
<dbReference type="GO" id="GO:0035914">
    <property type="term" value="P:skeletal muscle cell differentiation"/>
    <property type="evidence" value="ECO:0007669"/>
    <property type="project" value="Ensembl"/>
</dbReference>
<dbReference type="GO" id="GO:0048103">
    <property type="term" value="P:somatic stem cell division"/>
    <property type="evidence" value="ECO:0007669"/>
    <property type="project" value="Ensembl"/>
</dbReference>
<dbReference type="GO" id="GO:0021527">
    <property type="term" value="P:spinal cord association neuron differentiation"/>
    <property type="evidence" value="ECO:0007669"/>
    <property type="project" value="Ensembl"/>
</dbReference>
<dbReference type="GO" id="GO:0036465">
    <property type="term" value="P:synaptic vesicle recycling"/>
    <property type="evidence" value="ECO:0000304"/>
    <property type="project" value="ParkinsonsUK-UCL"/>
</dbReference>
<dbReference type="GO" id="GO:0006366">
    <property type="term" value="P:transcription by RNA polymerase II"/>
    <property type="evidence" value="ECO:0007669"/>
    <property type="project" value="Ensembl"/>
</dbReference>
<dbReference type="GO" id="GO:0021874">
    <property type="term" value="P:Wnt signaling pathway involved in forebrain neuroblast division"/>
    <property type="evidence" value="ECO:0007669"/>
    <property type="project" value="Ensembl"/>
</dbReference>
<dbReference type="CDD" id="cd19335">
    <property type="entry name" value="Wnt_Wnt3_Wnt3a"/>
    <property type="match status" value="1"/>
</dbReference>
<dbReference type="FunFam" id="3.30.2460.20:FF:000001">
    <property type="entry name" value="Wnt homolog"/>
    <property type="match status" value="1"/>
</dbReference>
<dbReference type="Gene3D" id="3.30.2460.20">
    <property type="match status" value="1"/>
</dbReference>
<dbReference type="InterPro" id="IPR005817">
    <property type="entry name" value="Wnt"/>
</dbReference>
<dbReference type="InterPro" id="IPR009141">
    <property type="entry name" value="Wnt3"/>
</dbReference>
<dbReference type="InterPro" id="IPR043158">
    <property type="entry name" value="Wnt_C"/>
</dbReference>
<dbReference type="InterPro" id="IPR018161">
    <property type="entry name" value="Wnt_CS"/>
</dbReference>
<dbReference type="PANTHER" id="PTHR12027:SF88">
    <property type="entry name" value="PROTEIN WNT-3A"/>
    <property type="match status" value="1"/>
</dbReference>
<dbReference type="PANTHER" id="PTHR12027">
    <property type="entry name" value="WNT RELATED"/>
    <property type="match status" value="1"/>
</dbReference>
<dbReference type="Pfam" id="PF00110">
    <property type="entry name" value="wnt"/>
    <property type="match status" value="1"/>
</dbReference>
<dbReference type="PRINTS" id="PR01843">
    <property type="entry name" value="WNT3PROTEIN"/>
</dbReference>
<dbReference type="PRINTS" id="PR01349">
    <property type="entry name" value="WNTPROTEIN"/>
</dbReference>
<dbReference type="SMART" id="SM00097">
    <property type="entry name" value="WNT1"/>
    <property type="match status" value="1"/>
</dbReference>
<dbReference type="PROSITE" id="PS00246">
    <property type="entry name" value="WNT1"/>
    <property type="match status" value="1"/>
</dbReference>
<reference key="1">
    <citation type="journal article" date="2001" name="Biochem. Biophys. Res. Commun.">
        <title>Molecular cloning and characterization of WNT3a and WNT14 clustered in human chromosome 1q42 region.</title>
        <authorList>
            <person name="Saitoh T."/>
            <person name="Hirai M."/>
            <person name="Katoh M."/>
        </authorList>
    </citation>
    <scope>NUCLEOTIDE SEQUENCE [MRNA] (ISOFORM 1)</scope>
    <scope>TISSUE SPECIFICITY</scope>
</reference>
<reference key="2">
    <citation type="journal article" date="2004" name="Nat. Genet.">
        <title>Complete sequencing and characterization of 21,243 full-length human cDNAs.</title>
        <authorList>
            <person name="Ota T."/>
            <person name="Suzuki Y."/>
            <person name="Nishikawa T."/>
            <person name="Otsuki T."/>
            <person name="Sugiyama T."/>
            <person name="Irie R."/>
            <person name="Wakamatsu A."/>
            <person name="Hayashi K."/>
            <person name="Sato H."/>
            <person name="Nagai K."/>
            <person name="Kimura K."/>
            <person name="Makita H."/>
            <person name="Sekine M."/>
            <person name="Obayashi M."/>
            <person name="Nishi T."/>
            <person name="Shibahara T."/>
            <person name="Tanaka T."/>
            <person name="Ishii S."/>
            <person name="Yamamoto J."/>
            <person name="Saito K."/>
            <person name="Kawai Y."/>
            <person name="Isono Y."/>
            <person name="Nakamura Y."/>
            <person name="Nagahari K."/>
            <person name="Murakami K."/>
            <person name="Yasuda T."/>
            <person name="Iwayanagi T."/>
            <person name="Wagatsuma M."/>
            <person name="Shiratori A."/>
            <person name="Sudo H."/>
            <person name="Hosoiri T."/>
            <person name="Kaku Y."/>
            <person name="Kodaira H."/>
            <person name="Kondo H."/>
            <person name="Sugawara M."/>
            <person name="Takahashi M."/>
            <person name="Kanda K."/>
            <person name="Yokoi T."/>
            <person name="Furuya T."/>
            <person name="Kikkawa E."/>
            <person name="Omura Y."/>
            <person name="Abe K."/>
            <person name="Kamihara K."/>
            <person name="Katsuta N."/>
            <person name="Sato K."/>
            <person name="Tanikawa M."/>
            <person name="Yamazaki M."/>
            <person name="Ninomiya K."/>
            <person name="Ishibashi T."/>
            <person name="Yamashita H."/>
            <person name="Murakawa K."/>
            <person name="Fujimori K."/>
            <person name="Tanai H."/>
            <person name="Kimata M."/>
            <person name="Watanabe M."/>
            <person name="Hiraoka S."/>
            <person name="Chiba Y."/>
            <person name="Ishida S."/>
            <person name="Ono Y."/>
            <person name="Takiguchi S."/>
            <person name="Watanabe S."/>
            <person name="Yosida M."/>
            <person name="Hotuta T."/>
            <person name="Kusano J."/>
            <person name="Kanehori K."/>
            <person name="Takahashi-Fujii A."/>
            <person name="Hara H."/>
            <person name="Tanase T.-O."/>
            <person name="Nomura Y."/>
            <person name="Togiya S."/>
            <person name="Komai F."/>
            <person name="Hara R."/>
            <person name="Takeuchi K."/>
            <person name="Arita M."/>
            <person name="Imose N."/>
            <person name="Musashino K."/>
            <person name="Yuuki H."/>
            <person name="Oshima A."/>
            <person name="Sasaki N."/>
            <person name="Aotsuka S."/>
            <person name="Yoshikawa Y."/>
            <person name="Matsunawa H."/>
            <person name="Ichihara T."/>
            <person name="Shiohata N."/>
            <person name="Sano S."/>
            <person name="Moriya S."/>
            <person name="Momiyama H."/>
            <person name="Satoh N."/>
            <person name="Takami S."/>
            <person name="Terashima Y."/>
            <person name="Suzuki O."/>
            <person name="Nakagawa S."/>
            <person name="Senoh A."/>
            <person name="Mizoguchi H."/>
            <person name="Goto Y."/>
            <person name="Shimizu F."/>
            <person name="Wakebe H."/>
            <person name="Hishigaki H."/>
            <person name="Watanabe T."/>
            <person name="Sugiyama A."/>
            <person name="Takemoto M."/>
            <person name="Kawakami B."/>
            <person name="Yamazaki M."/>
            <person name="Watanabe K."/>
            <person name="Kumagai A."/>
            <person name="Itakura S."/>
            <person name="Fukuzumi Y."/>
            <person name="Fujimori Y."/>
            <person name="Komiyama M."/>
            <person name="Tashiro H."/>
            <person name="Tanigami A."/>
            <person name="Fujiwara T."/>
            <person name="Ono T."/>
            <person name="Yamada K."/>
            <person name="Fujii Y."/>
            <person name="Ozaki K."/>
            <person name="Hirao M."/>
            <person name="Ohmori Y."/>
            <person name="Kawabata A."/>
            <person name="Hikiji T."/>
            <person name="Kobatake N."/>
            <person name="Inagaki H."/>
            <person name="Ikema Y."/>
            <person name="Okamoto S."/>
            <person name="Okitani R."/>
            <person name="Kawakami T."/>
            <person name="Noguchi S."/>
            <person name="Itoh T."/>
            <person name="Shigeta K."/>
            <person name="Senba T."/>
            <person name="Matsumura K."/>
            <person name="Nakajima Y."/>
            <person name="Mizuno T."/>
            <person name="Morinaga M."/>
            <person name="Sasaki M."/>
            <person name="Togashi T."/>
            <person name="Oyama M."/>
            <person name="Hata H."/>
            <person name="Watanabe M."/>
            <person name="Komatsu T."/>
            <person name="Mizushima-Sugano J."/>
            <person name="Satoh T."/>
            <person name="Shirai Y."/>
            <person name="Takahashi Y."/>
            <person name="Nakagawa K."/>
            <person name="Okumura K."/>
            <person name="Nagase T."/>
            <person name="Nomura N."/>
            <person name="Kikuchi H."/>
            <person name="Masuho Y."/>
            <person name="Yamashita R."/>
            <person name="Nakai K."/>
            <person name="Yada T."/>
            <person name="Nakamura Y."/>
            <person name="Ohara O."/>
            <person name="Isogai T."/>
            <person name="Sugano S."/>
        </authorList>
    </citation>
    <scope>NUCLEOTIDE SEQUENCE [LARGE SCALE MRNA] (ISOFORM 1)</scope>
</reference>
<reference key="3">
    <citation type="journal article" date="2006" name="Nature">
        <title>The DNA sequence and biological annotation of human chromosome 1.</title>
        <authorList>
            <person name="Gregory S.G."/>
            <person name="Barlow K.F."/>
            <person name="McLay K.E."/>
            <person name="Kaul R."/>
            <person name="Swarbreck D."/>
            <person name="Dunham A."/>
            <person name="Scott C.E."/>
            <person name="Howe K.L."/>
            <person name="Woodfine K."/>
            <person name="Spencer C.C.A."/>
            <person name="Jones M.C."/>
            <person name="Gillson C."/>
            <person name="Searle S."/>
            <person name="Zhou Y."/>
            <person name="Kokocinski F."/>
            <person name="McDonald L."/>
            <person name="Evans R."/>
            <person name="Phillips K."/>
            <person name="Atkinson A."/>
            <person name="Cooper R."/>
            <person name="Jones C."/>
            <person name="Hall R.E."/>
            <person name="Andrews T.D."/>
            <person name="Lloyd C."/>
            <person name="Ainscough R."/>
            <person name="Almeida J.P."/>
            <person name="Ambrose K.D."/>
            <person name="Anderson F."/>
            <person name="Andrew R.W."/>
            <person name="Ashwell R.I.S."/>
            <person name="Aubin K."/>
            <person name="Babbage A.K."/>
            <person name="Bagguley C.L."/>
            <person name="Bailey J."/>
            <person name="Beasley H."/>
            <person name="Bethel G."/>
            <person name="Bird C.P."/>
            <person name="Bray-Allen S."/>
            <person name="Brown J.Y."/>
            <person name="Brown A.J."/>
            <person name="Buckley D."/>
            <person name="Burton J."/>
            <person name="Bye J."/>
            <person name="Carder C."/>
            <person name="Chapman J.C."/>
            <person name="Clark S.Y."/>
            <person name="Clarke G."/>
            <person name="Clee C."/>
            <person name="Cobley V."/>
            <person name="Collier R.E."/>
            <person name="Corby N."/>
            <person name="Coville G.J."/>
            <person name="Davies J."/>
            <person name="Deadman R."/>
            <person name="Dunn M."/>
            <person name="Earthrowl M."/>
            <person name="Ellington A.G."/>
            <person name="Errington H."/>
            <person name="Frankish A."/>
            <person name="Frankland J."/>
            <person name="French L."/>
            <person name="Garner P."/>
            <person name="Garnett J."/>
            <person name="Gay L."/>
            <person name="Ghori M.R.J."/>
            <person name="Gibson R."/>
            <person name="Gilby L.M."/>
            <person name="Gillett W."/>
            <person name="Glithero R.J."/>
            <person name="Grafham D.V."/>
            <person name="Griffiths C."/>
            <person name="Griffiths-Jones S."/>
            <person name="Grocock R."/>
            <person name="Hammond S."/>
            <person name="Harrison E.S.I."/>
            <person name="Hart E."/>
            <person name="Haugen E."/>
            <person name="Heath P.D."/>
            <person name="Holmes S."/>
            <person name="Holt K."/>
            <person name="Howden P.J."/>
            <person name="Hunt A.R."/>
            <person name="Hunt S.E."/>
            <person name="Hunter G."/>
            <person name="Isherwood J."/>
            <person name="James R."/>
            <person name="Johnson C."/>
            <person name="Johnson D."/>
            <person name="Joy A."/>
            <person name="Kay M."/>
            <person name="Kershaw J.K."/>
            <person name="Kibukawa M."/>
            <person name="Kimberley A.M."/>
            <person name="King A."/>
            <person name="Knights A.J."/>
            <person name="Lad H."/>
            <person name="Laird G."/>
            <person name="Lawlor S."/>
            <person name="Leongamornlert D.A."/>
            <person name="Lloyd D.M."/>
            <person name="Loveland J."/>
            <person name="Lovell J."/>
            <person name="Lush M.J."/>
            <person name="Lyne R."/>
            <person name="Martin S."/>
            <person name="Mashreghi-Mohammadi M."/>
            <person name="Matthews L."/>
            <person name="Matthews N.S.W."/>
            <person name="McLaren S."/>
            <person name="Milne S."/>
            <person name="Mistry S."/>
            <person name="Moore M.J.F."/>
            <person name="Nickerson T."/>
            <person name="O'Dell C.N."/>
            <person name="Oliver K."/>
            <person name="Palmeiri A."/>
            <person name="Palmer S.A."/>
            <person name="Parker A."/>
            <person name="Patel D."/>
            <person name="Pearce A.V."/>
            <person name="Peck A.I."/>
            <person name="Pelan S."/>
            <person name="Phelps K."/>
            <person name="Phillimore B.J."/>
            <person name="Plumb R."/>
            <person name="Rajan J."/>
            <person name="Raymond C."/>
            <person name="Rouse G."/>
            <person name="Saenphimmachak C."/>
            <person name="Sehra H.K."/>
            <person name="Sheridan E."/>
            <person name="Shownkeen R."/>
            <person name="Sims S."/>
            <person name="Skuce C.D."/>
            <person name="Smith M."/>
            <person name="Steward C."/>
            <person name="Subramanian S."/>
            <person name="Sycamore N."/>
            <person name="Tracey A."/>
            <person name="Tromans A."/>
            <person name="Van Helmond Z."/>
            <person name="Wall M."/>
            <person name="Wallis J.M."/>
            <person name="White S."/>
            <person name="Whitehead S.L."/>
            <person name="Wilkinson J.E."/>
            <person name="Willey D.L."/>
            <person name="Williams H."/>
            <person name="Wilming L."/>
            <person name="Wray P.W."/>
            <person name="Wu Z."/>
            <person name="Coulson A."/>
            <person name="Vaudin M."/>
            <person name="Sulston J.E."/>
            <person name="Durbin R.M."/>
            <person name="Hubbard T."/>
            <person name="Wooster R."/>
            <person name="Dunham I."/>
            <person name="Carter N.P."/>
            <person name="McVean G."/>
            <person name="Ross M.T."/>
            <person name="Harrow J."/>
            <person name="Olson M.V."/>
            <person name="Beck S."/>
            <person name="Rogers J."/>
            <person name="Bentley D.R."/>
        </authorList>
    </citation>
    <scope>NUCLEOTIDE SEQUENCE [LARGE SCALE GENOMIC DNA]</scope>
</reference>
<reference key="4">
    <citation type="journal article" date="2004" name="Genome Res.">
        <title>The status, quality, and expansion of the NIH full-length cDNA project: the Mammalian Gene Collection (MGC).</title>
        <authorList>
            <consortium name="The MGC Project Team"/>
        </authorList>
    </citation>
    <scope>NUCLEOTIDE SEQUENCE [LARGE SCALE MRNA] (ISOFORMS 1 AND 2)</scope>
</reference>
<reference key="5">
    <citation type="journal article" date="1994" name="Cancer Res.">
        <title>Differential expression of human Wnt genes 2, 3, 4, and 7B in human breast cell lines and normal and disease states of human breast tissue.</title>
        <authorList>
            <person name="Huguet E.L."/>
            <person name="McMahon J.A."/>
            <person name="McMahon A.P."/>
            <person name="Bicknell R."/>
            <person name="Harris A.L."/>
        </authorList>
    </citation>
    <scope>NUCLEOTIDE SEQUENCE [MRNA] OF 207-330</scope>
    <source>
        <tissue>Mammary gland</tissue>
    </source>
</reference>
<reference key="6">
    <citation type="journal article" date="2005" name="J. Biol. Chem.">
        <title>Processing by convertases is not required for glypican-3-induced stimulation of hepatocellular carcinoma growth.</title>
        <authorList>
            <person name="Capurro M.I."/>
            <person name="Shi W."/>
            <person name="Sandal S."/>
            <person name="Filmus J."/>
        </authorList>
    </citation>
    <scope>INTERACTION WITH GPC3</scope>
</reference>
<reference key="7">
    <citation type="journal article" date="2006" name="Cell">
        <title>Wntless, a conserved membrane protein dedicated to the secretion of Wnt proteins from signaling cells.</title>
        <authorList>
            <person name="Baenziger C."/>
            <person name="Soldini D."/>
            <person name="Schuett C."/>
            <person name="Zipperlen P."/>
            <person name="Hausmann G."/>
            <person name="Basler K."/>
        </authorList>
    </citation>
    <scope>INTERACTION WITH WLS</scope>
</reference>
<reference key="8">
    <citation type="journal article" date="2010" name="J. Biol. Chem.">
        <title>Reconstitution of a frizzled8.Wnt3a.LRP6 signaling complex reveals multiple Wnt and Dkk1 binding sites on LRP6.</title>
        <authorList>
            <person name="Bourhis E."/>
            <person name="Tam C."/>
            <person name="Franke Y."/>
            <person name="Bazan J.F."/>
            <person name="Ernst J."/>
            <person name="Hwang J."/>
            <person name="Costa M."/>
            <person name="Cochran A.G."/>
            <person name="Hannoush R.N."/>
        </authorList>
    </citation>
    <scope>INTERACTION WITH LRP6 IN THE WNT/FZD/LRP6 COMPLEX</scope>
    <scope>FUNCTION</scope>
</reference>
<reference key="9">
    <citation type="journal article" date="2010" name="J. Cell Sci.">
        <title>WLS-dependent secretion of WNT3A requires Ser209 acylation and vacuolar acidification.</title>
        <authorList>
            <person name="Coombs G.S."/>
            <person name="Yu J."/>
            <person name="Canning C.A."/>
            <person name="Veltri C.A."/>
            <person name="Covey T.M."/>
            <person name="Cheong J.K."/>
            <person name="Utomo V."/>
            <person name="Banerjee N."/>
            <person name="Zhang Z.H."/>
            <person name="Jadulco R.C."/>
            <person name="Concepcion G.P."/>
            <person name="Bugni T.S."/>
            <person name="Harper M.K."/>
            <person name="Mihalek I."/>
            <person name="Jones C.M."/>
            <person name="Ireland C.M."/>
            <person name="Virshup D.M."/>
        </authorList>
    </citation>
    <scope>PALMITOLEOYLATION AT SER-209 BY PORCN</scope>
    <scope>MUTAGENESIS OF SER-209</scope>
</reference>
<reference key="10">
    <citation type="journal article" date="2010" name="Nature">
        <title>APCDD1 is a novel Wnt inhibitor mutated in hereditary hypotrichosis simplex.</title>
        <authorList>
            <person name="Shimomura Y."/>
            <person name="Agalliu D."/>
            <person name="Vonica A."/>
            <person name="Luria V."/>
            <person name="Wajid M."/>
            <person name="Baumer A."/>
            <person name="Belli S."/>
            <person name="Petukhova L."/>
            <person name="Schinzel A."/>
            <person name="Brivanlou A.H."/>
            <person name="Barres B.A."/>
            <person name="Christiano A.M."/>
        </authorList>
    </citation>
    <scope>INTERACTION WITH APCDD1</scope>
</reference>
<reference key="11">
    <citation type="journal article" date="2011" name="Cell. Signal.">
        <title>Fatty acid modification of Wnt1 and Wnt3a at serine is prerequisite for lipidation at cysteine and is essential for Wnt signalling.</title>
        <authorList>
            <person name="Doubravska L."/>
            <person name="Krausova M."/>
            <person name="Gradl D."/>
            <person name="Vojtechova M."/>
            <person name="Tumova L."/>
            <person name="Lukas J."/>
            <person name="Valenta T."/>
            <person name="Pospichalova V."/>
            <person name="Fafilek B."/>
            <person name="Plachy J."/>
            <person name="Sebesta O."/>
            <person name="Korinek V."/>
        </authorList>
    </citation>
    <scope>FUNCTION</scope>
    <scope>PRELIMINARY CYSTEINE PALMITOYLATION</scope>
    <scope>PALMITOLEOYLATION AT SER-209</scope>
    <scope>GLYCOSYLATION AT ASN-87 AND ASN-298</scope>
    <scope>MUTAGENESIS OF ASN-87; SER-209 AND ASN-298</scope>
</reference>
<reference key="12">
    <citation type="journal article" date="2014" name="J. Biol. Chem.">
        <title>Disulfide bond requirements for active wnt ligands.</title>
        <authorList>
            <person name="MacDonald B.T."/>
            <person name="Hien A."/>
            <person name="Zhang X."/>
            <person name="Iranloye O."/>
            <person name="Virshup D.M."/>
            <person name="Waterman M.L."/>
            <person name="He X."/>
        </authorList>
    </citation>
    <scope>FUNCTION</scope>
    <scope>SUBCELLULAR LOCATION</scope>
    <scope>DISULFIDE BONDS</scope>
    <scope>MUTAGENESIS OF SER-209; CYS-334 AND CYS-335</scope>
</reference>
<reference key="13">
    <citation type="journal article" date="2014" name="Nat. Chem. Biol.">
        <title>Single-cell imaging of Wnt palmitoylation by the acyltransferase porcupine.</title>
        <authorList>
            <person name="Gao X."/>
            <person name="Hannoush R.N."/>
        </authorList>
    </citation>
    <scope>LACK OF PALMITOYLATION AT CYS-77</scope>
    <scope>PALMITOLEOYLATION AT SER-209 BY PORCN</scope>
</reference>
<reference key="14">
    <citation type="journal article" date="2015" name="Nature">
        <title>Notum deacylates Wnt proteins to suppress signalling activity.</title>
        <authorList>
            <person name="Kakugawa S."/>
            <person name="Langton P.F."/>
            <person name="Zebisch M."/>
            <person name="Howell S.A."/>
            <person name="Chang T.H."/>
            <person name="Liu Y."/>
            <person name="Feizi T."/>
            <person name="Bineva G."/>
            <person name="O'Reilly N."/>
            <person name="Snijders A.P."/>
            <person name="Jones E.Y."/>
            <person name="Vincent J.P."/>
        </authorList>
    </citation>
    <scope>PALMITOLEOYLATION AT SER-209</scope>
    <scope>DEPALMITOLEOYLATION</scope>
</reference>
<reference key="15">
    <citation type="journal article" date="2016" name="Elife">
        <title>Active and water-soluble form of lipidated Wnt protein is maintained by a serum glycoprotein afamin/alpha-albumin.</title>
        <authorList>
            <person name="Mihara E."/>
            <person name="Hirai H."/>
            <person name="Yamamoto H."/>
            <person name="Tamura-Kawakami K."/>
            <person name="Matano M."/>
            <person name="Kikuchi A."/>
            <person name="Sato T."/>
            <person name="Takagi J."/>
        </authorList>
    </citation>
    <scope>INTERACTION WITH AFM</scope>
    <scope>FUNCTION</scope>
    <scope>SUBCELLULAR LOCATION</scope>
</reference>
<reference key="16">
    <citation type="journal article" date="2016" name="Nat. Cell Biol.">
        <title>The polycystin complex mediates Wnt/Ca(2+) signalling.</title>
        <authorList>
            <person name="Kim S."/>
            <person name="Nie H."/>
            <person name="Nesin V."/>
            <person name="Tran U."/>
            <person name="Outeda P."/>
            <person name="Bai C.X."/>
            <person name="Keeling J."/>
            <person name="Maskey D."/>
            <person name="Watnick T."/>
            <person name="Wessely O."/>
            <person name="Tsiokas L."/>
        </authorList>
    </citation>
    <scope>INTERACTION WITH PKD1</scope>
</reference>
<reference key="17">
    <citation type="journal article" date="2016" name="Hum. Mol. Genet.">
        <title>A secreted WNT-ligand-binding domain of FZD5 generated by a frameshift mutation causes autosomal dominant coloboma.</title>
        <authorList>
            <person name="Liu C."/>
            <person name="Widen S.A."/>
            <person name="Williamson K.A."/>
            <person name="Ratnapriya R."/>
            <person name="Gerth-Kahlert C."/>
            <person name="Rainger J."/>
            <person name="Alur R.P."/>
            <person name="Strachan E."/>
            <person name="Manjunath S.H."/>
            <person name="Balakrishnan A."/>
            <person name="Floyd J.A."/>
            <person name="Li T."/>
            <person name="Waskiewicz A."/>
            <person name="Brooks B.P."/>
            <person name="Lehmann O.J."/>
            <person name="FitzPatrick D.R."/>
            <person name="Swaroop A."/>
        </authorList>
    </citation>
    <scope>INTERACTION WITH FZD5</scope>
</reference>
<keyword id="KW-0002">3D-structure</keyword>
<keyword id="KW-0025">Alternative splicing</keyword>
<keyword id="KW-0217">Developmental protein</keyword>
<keyword id="KW-1015">Disulfide bond</keyword>
<keyword id="KW-0272">Extracellular matrix</keyword>
<keyword id="KW-0325">Glycoprotein</keyword>
<keyword id="KW-0449">Lipoprotein</keyword>
<keyword id="KW-1267">Proteomics identification</keyword>
<keyword id="KW-1185">Reference proteome</keyword>
<keyword id="KW-0964">Secreted</keyword>
<keyword id="KW-0732">Signal</keyword>
<keyword id="KW-0879">Wnt signaling pathway</keyword>
<accession>P56704</accession>
<accession>Q3SY79</accession>
<accession>Q3SY80</accession>
<accession>Q969P2</accession>
<protein>
    <recommendedName>
        <fullName>Protein Wnt-3a</fullName>
    </recommendedName>
</protein>
<proteinExistence type="evidence at protein level"/>
<feature type="signal peptide" evidence="3">
    <location>
        <begin position="1"/>
        <end position="18"/>
    </location>
</feature>
<feature type="chain" id="PRO_0000041418" description="Protein Wnt-3a">
    <location>
        <begin position="19"/>
        <end position="352"/>
    </location>
</feature>
<feature type="site" description="Cleavage; by TIKI1 and TIKI2" evidence="1">
    <location>
        <begin position="26"/>
        <end position="27"/>
    </location>
</feature>
<feature type="lipid moiety-binding region" description="O-palmitoleoyl serine; by PORCN" evidence="9 10 11 13">
    <location>
        <position position="209"/>
    </location>
</feature>
<feature type="glycosylation site" description="N-linked (GlcNAc...) asparagine" evidence="10">
    <location>
        <position position="87"/>
    </location>
</feature>
<feature type="glycosylation site" description="N-linked (GlcNAc...) asparagine" evidence="10">
    <location>
        <position position="298"/>
    </location>
</feature>
<feature type="disulfide bond" evidence="11">
    <location>
        <begin position="77"/>
        <end position="88"/>
    </location>
</feature>
<feature type="disulfide bond" evidence="2">
    <location>
        <begin position="128"/>
        <end position="136"/>
    </location>
</feature>
<feature type="disulfide bond" evidence="2">
    <location>
        <begin position="138"/>
        <end position="155"/>
    </location>
</feature>
<feature type="disulfide bond" evidence="2">
    <location>
        <begin position="203"/>
        <end position="217"/>
    </location>
</feature>
<feature type="disulfide bond" evidence="2">
    <location>
        <begin position="205"/>
        <end position="212"/>
    </location>
</feature>
<feature type="disulfide bond" evidence="2">
    <location>
        <begin position="281"/>
        <end position="312"/>
    </location>
</feature>
<feature type="disulfide bond" evidence="2">
    <location>
        <begin position="297"/>
        <end position="307"/>
    </location>
</feature>
<feature type="disulfide bond" evidence="2">
    <location>
        <begin position="311"/>
        <end position="351"/>
    </location>
</feature>
<feature type="disulfide bond" evidence="2">
    <location>
        <begin position="327"/>
        <end position="342"/>
    </location>
</feature>
<feature type="disulfide bond" evidence="2">
    <location>
        <begin position="329"/>
        <end position="339"/>
    </location>
</feature>
<feature type="disulfide bond" evidence="2">
    <location>
        <begin position="334"/>
        <end position="335"/>
    </location>
</feature>
<feature type="splice variant" id="VSP_046558" description="In isoform 2." evidence="17">
    <original>K</original>
    <variation>KNPGSRAGNSAHQPPHPQPPVRFHPPLRRAGKVP</variation>
    <location>
        <position position="352"/>
    </location>
</feature>
<feature type="mutagenesis site" description="Strongly reduced ability to stimulate Wnt-responsive reporters; when associated with Q-298." evidence="10">
    <original>N</original>
    <variation>Q</variation>
    <location>
        <position position="87"/>
    </location>
</feature>
<feature type="mutagenesis site" description="Abrogates WLS binding." evidence="9 10 12">
    <original>S</original>
    <variation>A</variation>
    <location>
        <position position="209"/>
    </location>
</feature>
<feature type="mutagenesis site" description="Complete loss of palmitoleoylation." evidence="9 10 12">
    <original>S</original>
    <variation>A</variation>
    <location>
        <position position="209"/>
    </location>
</feature>
<feature type="mutagenesis site" description="No effect on palmitoleoylation and secretion; the threonine can functionally replace the serine." evidence="9 10 12">
    <original>S</original>
    <variation>T</variation>
    <location>
        <position position="209"/>
    </location>
</feature>
<feature type="mutagenesis site" description="Strongly reduced ability to stimulate Wnt-responsive reporters; when associated with Q-87." evidence="10">
    <original>N</original>
    <variation>Q</variation>
    <location>
        <position position="298"/>
    </location>
</feature>
<feature type="mutagenesis site" description="No signaling activity despite the presence of significant amounts of secreted monomeric Wnt3a, exhibits dominant negative properties; when associated with A-335." evidence="12">
    <original>C</original>
    <variation>A</variation>
    <location>
        <position position="334"/>
    </location>
</feature>
<feature type="mutagenesis site" description="No signaling activity despite the presence of significant amounts of secreted monomeric Wnt3a, exhibits dominant negative properties; when associated with A-334." evidence="12">
    <original>C</original>
    <variation>A</variation>
    <location>
        <position position="335"/>
    </location>
</feature>
<feature type="helix" evidence="20">
    <location>
        <begin position="23"/>
        <end position="27"/>
    </location>
</feature>
<feature type="helix" evidence="20">
    <location>
        <begin position="29"/>
        <end position="31"/>
    </location>
</feature>
<feature type="strand" evidence="20">
    <location>
        <begin position="35"/>
        <end position="38"/>
    </location>
</feature>
<feature type="strand" evidence="20">
    <location>
        <begin position="42"/>
        <end position="44"/>
    </location>
</feature>
<feature type="helix" evidence="20">
    <location>
        <begin position="50"/>
        <end position="58"/>
    </location>
</feature>
<feature type="helix" evidence="20">
    <location>
        <begin position="63"/>
        <end position="80"/>
    </location>
</feature>
<feature type="turn" evidence="20">
    <location>
        <begin position="81"/>
        <end position="83"/>
    </location>
</feature>
<feature type="strand" evidence="20">
    <location>
        <begin position="94"/>
        <end position="96"/>
    </location>
</feature>
<feature type="helix" evidence="20">
    <location>
        <begin position="100"/>
        <end position="103"/>
    </location>
</feature>
<feature type="strand" evidence="21">
    <location>
        <begin position="104"/>
        <end position="106"/>
    </location>
</feature>
<feature type="helix" evidence="20">
    <location>
        <begin position="107"/>
        <end position="129"/>
    </location>
</feature>
<feature type="strand" evidence="20">
    <location>
        <begin position="134"/>
        <end position="137"/>
    </location>
</feature>
<feature type="strand" evidence="20">
    <location>
        <begin position="145"/>
        <end position="148"/>
    </location>
</feature>
<feature type="turn" evidence="20">
    <location>
        <begin position="150"/>
        <end position="153"/>
    </location>
</feature>
<feature type="helix" evidence="21">
    <location>
        <begin position="157"/>
        <end position="160"/>
    </location>
</feature>
<feature type="helix" evidence="20">
    <location>
        <begin position="161"/>
        <end position="169"/>
    </location>
</feature>
<feature type="helix" evidence="20">
    <location>
        <begin position="170"/>
        <end position="172"/>
    </location>
</feature>
<feature type="strand" evidence="20">
    <location>
        <begin position="176"/>
        <end position="178"/>
    </location>
</feature>
<feature type="helix" evidence="20">
    <location>
        <begin position="179"/>
        <end position="197"/>
    </location>
</feature>
<feature type="strand" evidence="20">
    <location>
        <begin position="200"/>
        <end position="207"/>
    </location>
</feature>
<feature type="strand" evidence="20">
    <location>
        <begin position="210"/>
        <end position="220"/>
    </location>
</feature>
<feature type="helix" evidence="20">
    <location>
        <begin position="224"/>
        <end position="237"/>
    </location>
</feature>
<feature type="strand" evidence="20">
    <location>
        <begin position="239"/>
        <end position="246"/>
    </location>
</feature>
<feature type="strand" evidence="20">
    <location>
        <begin position="248"/>
        <end position="251"/>
    </location>
</feature>
<feature type="strand" evidence="20">
    <location>
        <begin position="253"/>
        <end position="258"/>
    </location>
</feature>
<feature type="turn" evidence="20">
    <location>
        <begin position="260"/>
        <end position="262"/>
    </location>
</feature>
<feature type="strand" evidence="20">
    <location>
        <begin position="267"/>
        <end position="269"/>
    </location>
</feature>
<feature type="turn" evidence="20">
    <location>
        <begin position="285"/>
        <end position="288"/>
    </location>
</feature>
<feature type="strand" evidence="20">
    <location>
        <begin position="300"/>
        <end position="304"/>
    </location>
</feature>
<feature type="helix" evidence="20">
    <location>
        <begin position="307"/>
        <end position="310"/>
    </location>
</feature>
<feature type="strand" evidence="20">
    <location>
        <begin position="312"/>
        <end position="314"/>
    </location>
</feature>
<feature type="strand" evidence="20">
    <location>
        <begin position="319"/>
        <end position="328"/>
    </location>
</feature>
<feature type="strand" evidence="20">
    <location>
        <begin position="333"/>
        <end position="335"/>
    </location>
</feature>
<feature type="strand" evidence="20">
    <location>
        <begin position="340"/>
        <end position="348"/>
    </location>
</feature>
<name>WNT3A_HUMAN</name>